<name>CF015_HUMAN</name>
<proteinExistence type="evidence at protein level"/>
<gene>
    <name type="primary">C6orf15</name>
    <name type="synonym">STG</name>
    <name type="ORF">UNQ1840/PRO3566</name>
</gene>
<accession>Q6UXA7</accession>
<accession>B0S7V8</accession>
<accession>Q0EFA6</accession>
<accession>Q2L6G7</accession>
<accession>Q5SQ81</accession>
<accession>Q86Z05</accession>
<accession>Q9UIG3</accession>
<dbReference type="EMBL" id="AB031481">
    <property type="protein sequence ID" value="BAA88132.1"/>
    <property type="molecule type" value="mRNA"/>
</dbReference>
<dbReference type="EMBL" id="AY358438">
    <property type="protein sequence ID" value="AAQ88804.1"/>
    <property type="molecule type" value="mRNA"/>
</dbReference>
<dbReference type="EMBL" id="AB088114">
    <property type="protein sequence ID" value="BAC54947.1"/>
    <property type="molecule type" value="Genomic_DNA"/>
</dbReference>
<dbReference type="EMBL" id="AB202103">
    <property type="protein sequence ID" value="BAE78624.1"/>
    <property type="molecule type" value="Genomic_DNA"/>
</dbReference>
<dbReference type="EMBL" id="AB103620">
    <property type="protein sequence ID" value="BAF31282.1"/>
    <property type="molecule type" value="Genomic_DNA"/>
</dbReference>
<dbReference type="EMBL" id="AL662867">
    <property type="status" value="NOT_ANNOTATED_CDS"/>
    <property type="molecule type" value="Genomic_DNA"/>
</dbReference>
<dbReference type="EMBL" id="AL662844">
    <property type="status" value="NOT_ANNOTATED_CDS"/>
    <property type="molecule type" value="Genomic_DNA"/>
</dbReference>
<dbReference type="EMBL" id="AL773544">
    <property type="status" value="NOT_ANNOTATED_CDS"/>
    <property type="molecule type" value="Genomic_DNA"/>
</dbReference>
<dbReference type="EMBL" id="CR759805">
    <property type="status" value="NOT_ANNOTATED_CDS"/>
    <property type="molecule type" value="Genomic_DNA"/>
</dbReference>
<dbReference type="EMBL" id="BX927139">
    <property type="status" value="NOT_ANNOTATED_CDS"/>
    <property type="molecule type" value="Genomic_DNA"/>
</dbReference>
<dbReference type="EMBL" id="CR753819">
    <property type="status" value="NOT_ANNOTATED_CDS"/>
    <property type="molecule type" value="Genomic_DNA"/>
</dbReference>
<dbReference type="EMBL" id="CH471081">
    <property type="protein sequence ID" value="EAX03356.1"/>
    <property type="molecule type" value="Genomic_DNA"/>
</dbReference>
<dbReference type="CCDS" id="CCDS4693.1"/>
<dbReference type="RefSeq" id="NP_054789.2">
    <property type="nucleotide sequence ID" value="NM_014070.3"/>
</dbReference>
<dbReference type="BioGRID" id="118879">
    <property type="interactions" value="25"/>
</dbReference>
<dbReference type="IntAct" id="Q6UXA7">
    <property type="interactions" value="19"/>
</dbReference>
<dbReference type="STRING" id="9606.ENSP00000259870"/>
<dbReference type="GlyGen" id="Q6UXA7">
    <property type="glycosylation" value="1 site, 1 O-linked glycan (1 site)"/>
</dbReference>
<dbReference type="iPTMnet" id="Q6UXA7"/>
<dbReference type="BioMuta" id="C6orf15"/>
<dbReference type="DMDM" id="148887353"/>
<dbReference type="MassIVE" id="Q6UXA7"/>
<dbReference type="PaxDb" id="9606-ENSP00000259870"/>
<dbReference type="PeptideAtlas" id="Q6UXA7"/>
<dbReference type="ProteomicsDB" id="67579"/>
<dbReference type="Antibodypedia" id="653">
    <property type="antibodies" value="19 antibodies from 12 providers"/>
</dbReference>
<dbReference type="DNASU" id="29113"/>
<dbReference type="Ensembl" id="ENST00000259870.4">
    <property type="protein sequence ID" value="ENSP00000259870.3"/>
    <property type="gene ID" value="ENSG00000204542.3"/>
</dbReference>
<dbReference type="Ensembl" id="ENST00000383532.4">
    <property type="protein sequence ID" value="ENSP00000373024.4"/>
    <property type="gene ID" value="ENSG00000206461.4"/>
</dbReference>
<dbReference type="Ensembl" id="ENST00000412706.2">
    <property type="protein sequence ID" value="ENSP00000394931.2"/>
    <property type="gene ID" value="ENSG00000231624.2"/>
</dbReference>
<dbReference type="Ensembl" id="ENST00000427005.2">
    <property type="protein sequence ID" value="ENSP00000398496.2"/>
    <property type="gene ID" value="ENSG00000225543.2"/>
</dbReference>
<dbReference type="Ensembl" id="ENST00000440933.2">
    <property type="protein sequence ID" value="ENSP00000391756.2"/>
    <property type="gene ID" value="ENSG00000224105.2"/>
</dbReference>
<dbReference type="Ensembl" id="ENST00000452899.2">
    <property type="protein sequence ID" value="ENSP00000399436.2"/>
    <property type="gene ID" value="ENSG00000229432.2"/>
</dbReference>
<dbReference type="GeneID" id="29113"/>
<dbReference type="KEGG" id="hsa:29113"/>
<dbReference type="MANE-Select" id="ENST00000259870.4">
    <property type="protein sequence ID" value="ENSP00000259870.3"/>
    <property type="RefSeq nucleotide sequence ID" value="NM_014070.3"/>
    <property type="RefSeq protein sequence ID" value="NP_054789.2"/>
</dbReference>
<dbReference type="UCSC" id="uc003nsk.2">
    <property type="organism name" value="human"/>
</dbReference>
<dbReference type="AGR" id="HGNC:13927"/>
<dbReference type="CTD" id="29113"/>
<dbReference type="DisGeNET" id="29113"/>
<dbReference type="GeneCards" id="C6orf15"/>
<dbReference type="HGNC" id="HGNC:13927">
    <property type="gene designation" value="C6orf15"/>
</dbReference>
<dbReference type="HPA" id="ENSG00000204542">
    <property type="expression patterns" value="Group enriched (cervix, lymphoid tissue, skin)"/>
</dbReference>
<dbReference type="MIM" id="611401">
    <property type="type" value="gene"/>
</dbReference>
<dbReference type="neXtProt" id="NX_Q6UXA7"/>
<dbReference type="OpenTargets" id="ENSG00000204542"/>
<dbReference type="PharmGKB" id="PA134866404"/>
<dbReference type="VEuPathDB" id="HostDB:ENSG00000204542"/>
<dbReference type="eggNOG" id="ENOG502SDN4">
    <property type="taxonomic scope" value="Eukaryota"/>
</dbReference>
<dbReference type="GeneTree" id="ENSGT00390000010291"/>
<dbReference type="HOGENOM" id="CLU_919928_0_0_1"/>
<dbReference type="InParanoid" id="Q6UXA7"/>
<dbReference type="OMA" id="WPSEDPW"/>
<dbReference type="OrthoDB" id="9446516at2759"/>
<dbReference type="PAN-GO" id="Q6UXA7">
    <property type="GO annotations" value="2 GO annotations based on evolutionary models"/>
</dbReference>
<dbReference type="PhylomeDB" id="Q6UXA7"/>
<dbReference type="TreeFam" id="TF338298"/>
<dbReference type="PathwayCommons" id="Q6UXA7"/>
<dbReference type="SignaLink" id="Q6UXA7"/>
<dbReference type="BioGRID-ORCS" id="29113">
    <property type="hits" value="41 hits in 1135 CRISPR screens"/>
</dbReference>
<dbReference type="GenomeRNAi" id="29113"/>
<dbReference type="Pharos" id="Q6UXA7">
    <property type="development level" value="Tdark"/>
</dbReference>
<dbReference type="PRO" id="PR:Q6UXA7"/>
<dbReference type="Proteomes" id="UP000005640">
    <property type="component" value="Chromosome 6"/>
</dbReference>
<dbReference type="RNAct" id="Q6UXA7">
    <property type="molecule type" value="protein"/>
</dbReference>
<dbReference type="Bgee" id="ENSG00000204542">
    <property type="expression patterns" value="Expressed in skin of leg and 22 other cell types or tissues"/>
</dbReference>
<dbReference type="ExpressionAtlas" id="Q6UXA7">
    <property type="expression patterns" value="baseline and differential"/>
</dbReference>
<dbReference type="GO" id="GO:0031012">
    <property type="term" value="C:extracellular matrix"/>
    <property type="evidence" value="ECO:0000318"/>
    <property type="project" value="GO_Central"/>
</dbReference>
<dbReference type="GO" id="GO:0005576">
    <property type="term" value="C:extracellular region"/>
    <property type="evidence" value="ECO:0007669"/>
    <property type="project" value="UniProtKB-KW"/>
</dbReference>
<dbReference type="GO" id="GO:0030198">
    <property type="term" value="P:extracellular matrix organization"/>
    <property type="evidence" value="ECO:0000318"/>
    <property type="project" value="GO_Central"/>
</dbReference>
<dbReference type="InterPro" id="IPR026135">
    <property type="entry name" value="C6orf15"/>
</dbReference>
<dbReference type="PANTHER" id="PTHR15817:SF2">
    <property type="entry name" value="SIMILAR TO RIKEN CDNA 2300002M23"/>
    <property type="match status" value="1"/>
</dbReference>
<dbReference type="PANTHER" id="PTHR15817">
    <property type="entry name" value="STG PROTEIN"/>
    <property type="match status" value="1"/>
</dbReference>
<dbReference type="Pfam" id="PF15809">
    <property type="entry name" value="STG"/>
    <property type="match status" value="2"/>
</dbReference>
<evidence type="ECO:0000250" key="1"/>
<evidence type="ECO:0000255" key="2"/>
<evidence type="ECO:0000256" key="3">
    <source>
        <dbReference type="SAM" id="MobiDB-lite"/>
    </source>
</evidence>
<evidence type="ECO:0000269" key="4">
    <source>
    </source>
</evidence>
<evidence type="ECO:0000269" key="5">
    <source>
    </source>
</evidence>
<evidence type="ECO:0000269" key="6">
    <source>
    </source>
</evidence>
<evidence type="ECO:0000269" key="7">
    <source>
    </source>
</evidence>
<evidence type="ECO:0000269" key="8">
    <source>
    </source>
</evidence>
<comment type="subunit">
    <text evidence="1">Binds to numerous extracellular matrix proteins.</text>
</comment>
<comment type="interaction">
    <interactant intactId="EBI-11990870">
        <id>Q6UXA7</id>
    </interactant>
    <interactant intactId="EBI-11962084">
        <id>Q3LI66</id>
        <label>KRTAP6-2</label>
    </interactant>
    <organismsDiffer>false</organismsDiffer>
    <experiments>3</experiments>
</comment>
<comment type="interaction">
    <interactant intactId="EBI-11990870">
        <id>Q6UXA7</id>
    </interactant>
    <interactant intactId="EBI-9027467">
        <id>O75360</id>
        <label>PROP1</label>
    </interactant>
    <organismsDiffer>false</organismsDiffer>
    <experiments>3</experiments>
</comment>
<comment type="interaction">
    <interactant intactId="EBI-11990870">
        <id>Q6UXA7</id>
    </interactant>
    <interactant intactId="EBI-947187">
        <id>Q9UHD9</id>
        <label>UBQLN2</label>
    </interactant>
    <organismsDiffer>false</organismsDiffer>
    <experiments>8</experiments>
</comment>
<comment type="interaction">
    <interactant intactId="EBI-11990870">
        <id>Q6UXA7</id>
    </interactant>
    <interactant intactId="EBI-10191303">
        <id>O95231</id>
        <label>VENTX</label>
    </interactant>
    <organismsDiffer>false</organismsDiffer>
    <experiments>3</experiments>
</comment>
<comment type="interaction">
    <interactant intactId="EBI-11990870">
        <id>Q6UXA7</id>
    </interactant>
    <interactant intactId="EBI-1051237">
        <id>Q9BYJ9</id>
        <label>YTHDF1</label>
    </interactant>
    <organismsDiffer>false</organismsDiffer>
    <experiments>3</experiments>
</comment>
<comment type="subcellular location">
    <subcellularLocation>
        <location evidence="1">Secreted</location>
        <location evidence="1">Extracellular space</location>
        <location evidence="1">Extracellular matrix</location>
    </subcellularLocation>
</comment>
<comment type="tissue specificity">
    <text evidence="7">Expressed in skin and tonsils.</text>
</comment>
<organism>
    <name type="scientific">Homo sapiens</name>
    <name type="common">Human</name>
    <dbReference type="NCBI Taxonomy" id="9606"/>
    <lineage>
        <taxon>Eukaryota</taxon>
        <taxon>Metazoa</taxon>
        <taxon>Chordata</taxon>
        <taxon>Craniata</taxon>
        <taxon>Vertebrata</taxon>
        <taxon>Euteleostomi</taxon>
        <taxon>Mammalia</taxon>
        <taxon>Eutheria</taxon>
        <taxon>Euarchontoglires</taxon>
        <taxon>Primates</taxon>
        <taxon>Haplorrhini</taxon>
        <taxon>Catarrhini</taxon>
        <taxon>Hominidae</taxon>
        <taxon>Homo</taxon>
    </lineage>
</organism>
<reference key="1">
    <citation type="journal article" date="1999" name="Hum. Mol. Genet.">
        <title>Association analysis using refined microsatellite markers localizes a susceptibility locus for psoriasis vulgaris within a 111kb segment telomeric to the HLA-C gene.</title>
        <authorList>
            <person name="Oka A."/>
            <person name="Tamiya G."/>
            <person name="Tomizawa M."/>
            <person name="Ota M."/>
            <person name="Katsuyama Y."/>
            <person name="Makino S."/>
            <person name="Shiina T."/>
            <person name="Yoshitome M."/>
            <person name="Lizuka M."/>
            <person name="Sasao Y."/>
            <person name="Iwashita K."/>
            <person name="Kawakubo Y."/>
            <person name="Sugai J."/>
            <person name="Ozawa A."/>
            <person name="Ohkido M."/>
            <person name="Kimura M."/>
            <person name="Bahram S."/>
            <person name="Inoko H."/>
        </authorList>
    </citation>
    <scope>NUCLEOTIDE SEQUENCE [MRNA]</scope>
    <scope>VARIANT GLU-165</scope>
    <source>
        <tissue>Keratinocyte</tissue>
    </source>
</reference>
<reference key="2">
    <citation type="journal article" date="2003" name="Genome Res.">
        <title>The secreted protein discovery initiative (SPDI), a large-scale effort to identify novel human secreted and transmembrane proteins: a bioinformatics assessment.</title>
        <authorList>
            <person name="Clark H.F."/>
            <person name="Gurney A.L."/>
            <person name="Abaya E."/>
            <person name="Baker K."/>
            <person name="Baldwin D.T."/>
            <person name="Brush J."/>
            <person name="Chen J."/>
            <person name="Chow B."/>
            <person name="Chui C."/>
            <person name="Crowley C."/>
            <person name="Currell B."/>
            <person name="Deuel B."/>
            <person name="Dowd P."/>
            <person name="Eaton D."/>
            <person name="Foster J.S."/>
            <person name="Grimaldi C."/>
            <person name="Gu Q."/>
            <person name="Hass P.E."/>
            <person name="Heldens S."/>
            <person name="Huang A."/>
            <person name="Kim H.S."/>
            <person name="Klimowski L."/>
            <person name="Jin Y."/>
            <person name="Johnson S."/>
            <person name="Lee J."/>
            <person name="Lewis L."/>
            <person name="Liao D."/>
            <person name="Mark M.R."/>
            <person name="Robbie E."/>
            <person name="Sanchez C."/>
            <person name="Schoenfeld J."/>
            <person name="Seshagiri S."/>
            <person name="Simmons L."/>
            <person name="Singh J."/>
            <person name="Smith V."/>
            <person name="Stinson J."/>
            <person name="Vagts A."/>
            <person name="Vandlen R.L."/>
            <person name="Watanabe C."/>
            <person name="Wieand D."/>
            <person name="Woods K."/>
            <person name="Xie M.-H."/>
            <person name="Yansura D.G."/>
            <person name="Yi S."/>
            <person name="Yu G."/>
            <person name="Yuan J."/>
            <person name="Zhang M."/>
            <person name="Zhang Z."/>
            <person name="Goddard A.D."/>
            <person name="Wood W.I."/>
            <person name="Godowski P.J."/>
            <person name="Gray A.M."/>
        </authorList>
    </citation>
    <scope>NUCLEOTIDE SEQUENCE [LARGE SCALE MRNA]</scope>
    <scope>VARIANTS PHE-40; PRO-83 AND GLU-165</scope>
</reference>
<reference key="3">
    <citation type="journal article" date="2006" name="Genetics">
        <title>Rapid evolution of major histocompatibility complex class I genes in primates generates new disease alleles in humans via hitchhiking diversity.</title>
        <authorList>
            <person name="Shiina T."/>
            <person name="Ota M."/>
            <person name="Shimizu S."/>
            <person name="Katsuyama Y."/>
            <person name="Hashimoto N."/>
            <person name="Takasu M."/>
            <person name="Anzai T."/>
            <person name="Kulski J.K."/>
            <person name="Kikkawa E."/>
            <person name="Naruse T."/>
            <person name="Kimura N."/>
            <person name="Yanagiya K."/>
            <person name="Watanabe A."/>
            <person name="Hosomichi K."/>
            <person name="Kohara S."/>
            <person name="Iwamoto C."/>
            <person name="Umehara Y."/>
            <person name="Meyer A."/>
            <person name="Wanner V."/>
            <person name="Sano K."/>
            <person name="Macquin C."/>
            <person name="Ikeo K."/>
            <person name="Tokunaga K."/>
            <person name="Gojobori T."/>
            <person name="Inoko H."/>
            <person name="Bahram S."/>
        </authorList>
    </citation>
    <scope>NUCLEOTIDE SEQUENCE [LARGE SCALE GENOMIC DNA]</scope>
    <scope>VARIANT MET-5</scope>
</reference>
<reference key="4">
    <citation type="journal article" date="2003" name="Nature">
        <title>The DNA sequence and analysis of human chromosome 6.</title>
        <authorList>
            <person name="Mungall A.J."/>
            <person name="Palmer S.A."/>
            <person name="Sims S.K."/>
            <person name="Edwards C.A."/>
            <person name="Ashurst J.L."/>
            <person name="Wilming L."/>
            <person name="Jones M.C."/>
            <person name="Horton R."/>
            <person name="Hunt S.E."/>
            <person name="Scott C.E."/>
            <person name="Gilbert J.G.R."/>
            <person name="Clamp M.E."/>
            <person name="Bethel G."/>
            <person name="Milne S."/>
            <person name="Ainscough R."/>
            <person name="Almeida J.P."/>
            <person name="Ambrose K.D."/>
            <person name="Andrews T.D."/>
            <person name="Ashwell R.I.S."/>
            <person name="Babbage A.K."/>
            <person name="Bagguley C.L."/>
            <person name="Bailey J."/>
            <person name="Banerjee R."/>
            <person name="Barker D.J."/>
            <person name="Barlow K.F."/>
            <person name="Bates K."/>
            <person name="Beare D.M."/>
            <person name="Beasley H."/>
            <person name="Beasley O."/>
            <person name="Bird C.P."/>
            <person name="Blakey S.E."/>
            <person name="Bray-Allen S."/>
            <person name="Brook J."/>
            <person name="Brown A.J."/>
            <person name="Brown J.Y."/>
            <person name="Burford D.C."/>
            <person name="Burrill W."/>
            <person name="Burton J."/>
            <person name="Carder C."/>
            <person name="Carter N.P."/>
            <person name="Chapman J.C."/>
            <person name="Clark S.Y."/>
            <person name="Clark G."/>
            <person name="Clee C.M."/>
            <person name="Clegg S."/>
            <person name="Cobley V."/>
            <person name="Collier R.E."/>
            <person name="Collins J.E."/>
            <person name="Colman L.K."/>
            <person name="Corby N.R."/>
            <person name="Coville G.J."/>
            <person name="Culley K.M."/>
            <person name="Dhami P."/>
            <person name="Davies J."/>
            <person name="Dunn M."/>
            <person name="Earthrowl M.E."/>
            <person name="Ellington A.E."/>
            <person name="Evans K.A."/>
            <person name="Faulkner L."/>
            <person name="Francis M.D."/>
            <person name="Frankish A."/>
            <person name="Frankland J."/>
            <person name="French L."/>
            <person name="Garner P."/>
            <person name="Garnett J."/>
            <person name="Ghori M.J."/>
            <person name="Gilby L.M."/>
            <person name="Gillson C.J."/>
            <person name="Glithero R.J."/>
            <person name="Grafham D.V."/>
            <person name="Grant M."/>
            <person name="Gribble S."/>
            <person name="Griffiths C."/>
            <person name="Griffiths M.N.D."/>
            <person name="Hall R."/>
            <person name="Halls K.S."/>
            <person name="Hammond S."/>
            <person name="Harley J.L."/>
            <person name="Hart E.A."/>
            <person name="Heath P.D."/>
            <person name="Heathcott R."/>
            <person name="Holmes S.J."/>
            <person name="Howden P.J."/>
            <person name="Howe K.L."/>
            <person name="Howell G.R."/>
            <person name="Huckle E."/>
            <person name="Humphray S.J."/>
            <person name="Humphries M.D."/>
            <person name="Hunt A.R."/>
            <person name="Johnson C.M."/>
            <person name="Joy A.A."/>
            <person name="Kay M."/>
            <person name="Keenan S.J."/>
            <person name="Kimberley A.M."/>
            <person name="King A."/>
            <person name="Laird G.K."/>
            <person name="Langford C."/>
            <person name="Lawlor S."/>
            <person name="Leongamornlert D.A."/>
            <person name="Leversha M."/>
            <person name="Lloyd C.R."/>
            <person name="Lloyd D.M."/>
            <person name="Loveland J.E."/>
            <person name="Lovell J."/>
            <person name="Martin S."/>
            <person name="Mashreghi-Mohammadi M."/>
            <person name="Maslen G.L."/>
            <person name="Matthews L."/>
            <person name="McCann O.T."/>
            <person name="McLaren S.J."/>
            <person name="McLay K."/>
            <person name="McMurray A."/>
            <person name="Moore M.J.F."/>
            <person name="Mullikin J.C."/>
            <person name="Niblett D."/>
            <person name="Nickerson T."/>
            <person name="Novik K.L."/>
            <person name="Oliver K."/>
            <person name="Overton-Larty E.K."/>
            <person name="Parker A."/>
            <person name="Patel R."/>
            <person name="Pearce A.V."/>
            <person name="Peck A.I."/>
            <person name="Phillimore B.J.C.T."/>
            <person name="Phillips S."/>
            <person name="Plumb R.W."/>
            <person name="Porter K.M."/>
            <person name="Ramsey Y."/>
            <person name="Ranby S.A."/>
            <person name="Rice C.M."/>
            <person name="Ross M.T."/>
            <person name="Searle S.M."/>
            <person name="Sehra H.K."/>
            <person name="Sheridan E."/>
            <person name="Skuce C.D."/>
            <person name="Smith S."/>
            <person name="Smith M."/>
            <person name="Spraggon L."/>
            <person name="Squares S.L."/>
            <person name="Steward C.A."/>
            <person name="Sycamore N."/>
            <person name="Tamlyn-Hall G."/>
            <person name="Tester J."/>
            <person name="Theaker A.J."/>
            <person name="Thomas D.W."/>
            <person name="Thorpe A."/>
            <person name="Tracey A."/>
            <person name="Tromans A."/>
            <person name="Tubby B."/>
            <person name="Wall M."/>
            <person name="Wallis J.M."/>
            <person name="West A.P."/>
            <person name="White S.S."/>
            <person name="Whitehead S.L."/>
            <person name="Whittaker H."/>
            <person name="Wild A."/>
            <person name="Willey D.J."/>
            <person name="Wilmer T.E."/>
            <person name="Wood J.M."/>
            <person name="Wray P.W."/>
            <person name="Wyatt J.C."/>
            <person name="Young L."/>
            <person name="Younger R.M."/>
            <person name="Bentley D.R."/>
            <person name="Coulson A."/>
            <person name="Durbin R.M."/>
            <person name="Hubbard T."/>
            <person name="Sulston J.E."/>
            <person name="Dunham I."/>
            <person name="Rogers J."/>
            <person name="Beck S."/>
        </authorList>
    </citation>
    <scope>NUCLEOTIDE SEQUENCE [LARGE SCALE GENOMIC DNA]</scope>
    <scope>VARIANTS PHE-40; ASP-43; PRO-83 AND GLU-165</scope>
</reference>
<reference key="5">
    <citation type="submission" date="2005-07" db="EMBL/GenBank/DDBJ databases">
        <authorList>
            <person name="Mural R.J."/>
            <person name="Istrail S."/>
            <person name="Sutton G.G."/>
            <person name="Florea L."/>
            <person name="Halpern A.L."/>
            <person name="Mobarry C.M."/>
            <person name="Lippert R."/>
            <person name="Walenz B."/>
            <person name="Shatkay H."/>
            <person name="Dew I."/>
            <person name="Miller J.R."/>
            <person name="Flanigan M.J."/>
            <person name="Edwards N.J."/>
            <person name="Bolanos R."/>
            <person name="Fasulo D."/>
            <person name="Halldorsson B.V."/>
            <person name="Hannenhalli S."/>
            <person name="Turner R."/>
            <person name="Yooseph S."/>
            <person name="Lu F."/>
            <person name="Nusskern D.R."/>
            <person name="Shue B.C."/>
            <person name="Zheng X.H."/>
            <person name="Zhong F."/>
            <person name="Delcher A.L."/>
            <person name="Huson D.H."/>
            <person name="Kravitz S.A."/>
            <person name="Mouchard L."/>
            <person name="Reinert K."/>
            <person name="Remington K.A."/>
            <person name="Clark A.G."/>
            <person name="Waterman M.S."/>
            <person name="Eichler E.E."/>
            <person name="Adams M.D."/>
            <person name="Hunkapiller M.W."/>
            <person name="Myers E.W."/>
            <person name="Venter J.C."/>
        </authorList>
    </citation>
    <scope>NUCLEOTIDE SEQUENCE [LARGE SCALE GENOMIC DNA]</scope>
</reference>
<reference key="6">
    <citation type="journal article" date="2004" name="Exp. Dermatol.">
        <title>STG does not associate with psoriasis in the Swedish population.</title>
        <authorList>
            <person name="Sanchez F."/>
            <person name="Holm S.J."/>
            <person name="Mallbris L."/>
            <person name="O'Brien K.P."/>
            <person name="Staehle M."/>
        </authorList>
    </citation>
    <scope>TISSUE SPECIFICITY</scope>
    <scope>VARIANTS PRO-83 AND GLU-165</scope>
</reference>
<feature type="signal peptide" evidence="2">
    <location>
        <begin position="1"/>
        <end position="26"/>
    </location>
</feature>
<feature type="chain" id="PRO_0000019541" description="Uncharacterized protein C6orf15">
    <location>
        <begin position="27"/>
        <end position="325"/>
    </location>
</feature>
<feature type="region of interest" description="Disordered" evidence="3">
    <location>
        <begin position="41"/>
        <end position="110"/>
    </location>
</feature>
<feature type="region of interest" description="Disordered" evidence="3">
    <location>
        <begin position="147"/>
        <end position="189"/>
    </location>
</feature>
<feature type="compositionally biased region" description="Polar residues" evidence="3">
    <location>
        <begin position="41"/>
        <end position="60"/>
    </location>
</feature>
<feature type="compositionally biased region" description="Low complexity" evidence="3">
    <location>
        <begin position="147"/>
        <end position="157"/>
    </location>
</feature>
<feature type="sequence variant" id="VAR_054399" description="In dbSNP:rs2270191." evidence="8">
    <original>V</original>
    <variation>M</variation>
    <location>
        <position position="5"/>
    </location>
</feature>
<feature type="sequence variant" id="VAR_022907" description="In dbSNP:rs2233974." evidence="5 6">
    <original>L</original>
    <variation>F</variation>
    <location>
        <position position="40"/>
    </location>
</feature>
<feature type="sequence variant" id="VAR_022908" description="In dbSNP:rs2233975." evidence="6">
    <original>N</original>
    <variation>D</variation>
    <location>
        <position position="43"/>
    </location>
</feature>
<feature type="sequence variant" id="VAR_050801" description="In dbSNP:rs2233976.">
    <original>G</original>
    <variation>R</variation>
    <location>
        <position position="48"/>
    </location>
</feature>
<feature type="sequence variant" id="VAR_028732" description="In dbSNP:rs2233977.">
    <original>V</original>
    <variation>A</variation>
    <location>
        <position position="81"/>
    </location>
</feature>
<feature type="sequence variant" id="VAR_022909" description="In dbSNP:rs1265053." evidence="5 6 7">
    <original>A</original>
    <variation>P</variation>
    <location>
        <position position="83"/>
    </location>
</feature>
<feature type="sequence variant" id="VAR_028733" description="In dbSNP:rs2233978.">
    <original>A</original>
    <variation>P</variation>
    <location>
        <position position="145"/>
    </location>
</feature>
<feature type="sequence variant" id="VAR_022910" description="In dbSNP:rs1265054." evidence="4 5 6 7">
    <original>K</original>
    <variation>E</variation>
    <location>
        <position position="165"/>
    </location>
</feature>
<feature type="sequence variant" id="VAR_050802" description="In dbSNP:rs2233982.">
    <original>M</original>
    <variation>I</variation>
    <location>
        <position position="232"/>
    </location>
</feature>
<feature type="sequence variant" id="VAR_028734" description="In dbSNP:rs2233984.">
    <original>G</original>
    <variation>D</variation>
    <location>
        <position position="291"/>
    </location>
</feature>
<protein>
    <recommendedName>
        <fullName>Uncharacterized protein C6orf15</fullName>
    </recommendedName>
    <alternativeName>
        <fullName>Protein STG</fullName>
    </alternativeName>
</protein>
<keyword id="KW-0272">Extracellular matrix</keyword>
<keyword id="KW-1267">Proteomics identification</keyword>
<keyword id="KW-1185">Reference proteome</keyword>
<keyword id="KW-0964">Secreted</keyword>
<keyword id="KW-0732">Signal</keyword>
<sequence>MQGRVAGSCAPLGLLLVCLHLPGLFARSIGVVEEKVSQNLGTNLPQLGQPSSTGPSNSEHPQPALDPRSNDLARVPLKLSVPASDGFPPAGGSAVQRWPPSWGLPAMDSWPPEDPWQMMAAAAEDRLGEALPEELSYLSSAAALAPGSGPLPGESSPDATGLSPKASLLHQDSESRRLPRSNSLGAGGKILSQRPPWSLIHRVLPDHPWGTLNPSVSWGGGGPGTGWGTRPMPHPEGIWGINNQPPGTSWGNINRYPGGSWGNINRYPGGSWGNINRYPGGSWGNIHLYPGINNPFPPGVLRPPGSSWNIPAGFPNPPSPRLQWG</sequence>